<organism>
    <name type="scientific">Homo sapiens</name>
    <name type="common">Human</name>
    <dbReference type="NCBI Taxonomy" id="9606"/>
    <lineage>
        <taxon>Eukaryota</taxon>
        <taxon>Metazoa</taxon>
        <taxon>Chordata</taxon>
        <taxon>Craniata</taxon>
        <taxon>Vertebrata</taxon>
        <taxon>Euteleostomi</taxon>
        <taxon>Mammalia</taxon>
        <taxon>Eutheria</taxon>
        <taxon>Euarchontoglires</taxon>
        <taxon>Primates</taxon>
        <taxon>Haplorrhini</taxon>
        <taxon>Catarrhini</taxon>
        <taxon>Hominidae</taxon>
        <taxon>Homo</taxon>
    </lineage>
</organism>
<comment type="function">
    <text evidence="2 3 5 6 7 8 9 11 13 14 15 16 19 21 24 26 28">Receptor for the invariable Fc fragment of immunoglobulin gamma (IgG). Optimally activated upon binding of clustered antigen-IgG complexes displayed on cell surfaces, triggers lysis of antibody-coated cells, a process known as antibody-dependent cellular cytotoxicity (ADCC). Does not bind free monomeric IgG, thus avoiding inappropriate effector cell activation in the absence of antigenic trigger (PubMed:11711607, PubMed:21768335, PubMed:22023369, PubMed:24412922, PubMed:25786175, PubMed:25816339, PubMed:28652325, PubMed:8609432, PubMed:9242542). Mediates IgG effector functions on natural killer (NK) cells. Binds antigen-IgG complexes generated upon infection and triggers NK cell-dependent cytokine production and degranulation to limit viral load and propagation. Involved in the generation of memory-like adaptive NK cells capable to produce high amounts of IFNG and to efficiently eliminate virus-infected cells via ADCC (PubMed:24412922, PubMed:25786175). Regulates NK cell survival and proliferation, in particular by preventing NK cell progenitor apoptosis (PubMed:29967280, PubMed:9916693). Fc-binding subunit that associates with CD247 and/or FCER1G adapters to form functional signaling complexes. Following the engagement of antigen-IgG complexes, triggers phosphorylation of immunoreceptor tyrosine-based activation motif (ITAM)-containing adapters with subsequent activation of phosphatidylinositol 3-kinase signaling and sustained elevation of intracellular calcium that ultimately drive NK cell activation. The ITAM-dependent signaling coupled to receptor phosphorylation by PKC mediates robust intracellular calcium flux that leads to production of pro-inflammatory cytokines, whereas in the absence of receptor phosphorylation it mainly activates phosphatidylinositol 3-kinase signaling leading to cell degranulation (PubMed:1825220, PubMed:23024279, PubMed:2532305). Costimulates NK cells and trigger lysis of target cells independently of IgG binding (PubMed:10318937, PubMed:23006327). Mediates the antitumor activities of therapeutic antibodies. Upon ligation on monocytes triggers TNFA-dependent ADCC of IgG-coated tumor cells (PubMed:27670158). Mediates enhanced ADCC in response to afucosylated IgGs (PubMed:34485821).</text>
</comment>
<comment type="function">
    <text evidence="17">(Microbial infection) Involved in Dengue virus pathogenesis via antibody-dependent enhancement (ADE) mechanism. Secondary infection with Dengue virus triggers elevated levels of afucosylated non-neutralizing IgG1s with reactivity to viral envelope/E protein. Viral antigen-IgG1 complexes bind with high affinity to FCGR3A, facilitating virus entry in myeloid cells and subsequent viral replication.</text>
</comment>
<comment type="subunit">
    <text evidence="3 5 6 7 8 9 13 24 26">Forms a heterooligomeric complex with ITAM-containing signaling subunits, either a homodimer of CD247, a homodimer of FCER1G or a heterodimer of CD247 and FCER1G (PubMed:1825220, PubMed:2532305, PubMed:28652325). Interacts (via transmembrane domain) with signaling subunits; this interaction is a prerequisite for receptor complex expression on the cell surface and intracellular signal transduction (PubMed:1825220, PubMed:2532305, PubMed:28652325). Binds the Fc region of antigen-complexed IgG with a preference for IgG1 and IgG3 isotypes (PubMed:11711607, PubMed:21768335, PubMed:22023369, PubMed:8609432, PubMed:9242542). Interacts with CD2; this interaction is involved in NK cell activation and cytotoxicity (PubMed:23006327). Interacts with S100A4; this interaction inhibits PKC-dependent phosphorylation of FCGR3A (PubMed:23024279).</text>
</comment>
<comment type="interaction">
    <interactant intactId="EBI-2833956">
        <id>P08637</id>
    </interactant>
    <interactant intactId="EBI-10294579">
        <id>Q99706</id>
        <label>KIR2DL4</label>
    </interactant>
    <organismsDiffer>false</organismsDiffer>
    <experiments>2</experiments>
</comment>
<comment type="interaction">
    <interactant intactId="EBI-2833956">
        <id>P08637</id>
    </interactant>
    <interactant intactId="EBI-744408">
        <id>O75150</id>
        <label>RNF40</label>
    </interactant>
    <organismsDiffer>false</organismsDiffer>
    <experiments>2</experiments>
</comment>
<comment type="subcellular location">
    <subcellularLocation>
        <location evidence="5 8 10 13 18 19">Cell membrane</location>
        <topology evidence="1">Single-pass type I membrane protein</topology>
    </subcellularLocation>
    <subcellularLocation>
        <location evidence="15 19">Secreted</location>
    </subcellularLocation>
    <text evidence="15 19">Also exists as a soluble receptor.</text>
</comment>
<comment type="tissue specificity">
    <text evidence="12 16">Expressed in natural killer cells (at protein level) (PubMed:2526846). Expressed in a subset of circulating monocytes (at protein level) (PubMed:27670158).</text>
</comment>
<comment type="induction">
    <text evidence="16">Up-regulated in a monocyte subset upon exposure to IL10, TGFB and MCSF.</text>
</comment>
<comment type="PTM">
    <text evidence="6 7">Glycosylated. Contains high mannose- and complex-type oligosaccharides. Glycosylation at Asn-180 is mandatory for high affinity binding to the Fc and for discrimination between fucosylated and afucosylated IgG glycoforms.</text>
</comment>
<comment type="PTM">
    <text evidence="10 15 19">Undergoes rapid ectodomain shedding upon NK cell stimulation. The soluble form is produced by a proteolytic cleavage mediated by ADAM17. Repeated stimulation causes receptor shedding, a mechanism that allows for increased NK cell motility and detachment from opsonized target cells while avoiding activation-induced NK cell apoptosis.</text>
</comment>
<comment type="PTM">
    <text evidence="9">Phosphorylated at RSSTR motif by PKC. The relevant physiological PKCs might be PRKCI, PRKCG, PRKCE, PRKCH and PRKCQ.</text>
</comment>
<comment type="disease" evidence="8 23 24 25">
    <disease id="DI-04050">
        <name>Immunodeficiency 20</name>
        <acronym>IMD20</acronym>
        <description>A rare autosomal recessive primary immunodeficiency characterized by functional deficiency of NK cells. Affected individuals typically present with severe herpes viral infections, particularly Epstein Barr virus (EBV), and human papillomavirus (HPV).</description>
        <dbReference type="MIM" id="615707"/>
    </disease>
    <text>The disease is caused by variants affecting the gene represented in this entry.</text>
</comment>
<comment type="miscellaneous">
    <text>Encoded by one of two nearly identical genes: FCGR3A (shown here) and FCGR3B which are expressed in a tissue-specific manner. The Phe-203 in III-A determines the transmembrane domains whereas the 'Ser-203' in III-B determines the GPI-anchoring.</text>
</comment>
<comment type="miscellaneous">
    <text evidence="20">FCGR3A in mammals is the true ortholog of FCGR4 in rodents. The FCGR2A-HSPA6-FCGR4-FCGR2B module was duplicated in great apes through non-allelic homologous recombination, giving rise to two FCGR4-type genes and to FCGR2C, a hybrid gene combining FCGR2A and FCGR2B. While FCGR3A kept the original FCGR4 functionality, FCGR3B rapidly evolved and acquired specific features coding for a GPI-anchored receptor.</text>
</comment>
<comment type="sequence caution" evidence="36">
    <conflict type="erroneous initiation">
        <sequence resource="EMBL-CDS" id="BAD96988"/>
    </conflict>
    <text>Extended N-terminus.</text>
</comment>
<comment type="sequence caution" evidence="36">
    <conflict type="erroneous initiation">
        <sequence resource="EMBL-CDS" id="BAD97015"/>
    </conflict>
    <text>Extended N-terminus.</text>
</comment>
<comment type="online information" name="FCGR3Abase">
    <link uri="https://databases.lovd.nl/shared/genes/FCGR3A"/>
    <text>FCGR3A mutation db</text>
</comment>
<name>FCG3A_HUMAN</name>
<sequence length="254" mass="29089">MWQLLLPTALLLLVSAGMRTEDLPKAVVFLEPQWYRVLEKDSVTLKCQGAYSPEDNSTQWFHNESLISSQASSYFIDAATVDDSGEYRCQTNLSTLSDPVQLEVHIGWLLLQAPRWVFKEEDPIHLRCHSWKNTALHKVTYLQNGKGRKYFHHNSDFYIPKATLKDSGSYFCRGLFGSKNVSSETVNITITQGLAVSTISSFFPPGYQVSFCLVMVLLFAVDTGLYFSVKTNIRSSTRDWKDHKFKWRKDPQDK</sequence>
<protein>
    <recommendedName>
        <fullName evidence="35">Low affinity immunoglobulin gamma Fc region receptor III-A</fullName>
        <shortName>IgG Fc receptor III-A</shortName>
    </recommendedName>
    <alternativeName>
        <fullName evidence="30 32">CD16-II</fullName>
    </alternativeName>
    <alternativeName>
        <fullName>CD16a antigen</fullName>
    </alternativeName>
    <alternativeName>
        <fullName>Fc-gamma RIII-alpha</fullName>
        <shortName>Fc-gamma RIII</shortName>
        <shortName>Fc-gamma RIIIa</shortName>
        <shortName>FcRIII</shortName>
        <shortName>FcRIIIa</shortName>
        <shortName evidence="34">FcgammaRIIIA</shortName>
    </alternativeName>
    <alternativeName>
        <fullName>FcR-10</fullName>
    </alternativeName>
    <alternativeName>
        <fullName>IgG Fc receptor III-2</fullName>
    </alternativeName>
    <cdAntigenName evidence="33">CD16a</cdAntigenName>
</protein>
<proteinExistence type="evidence at protein level"/>
<evidence type="ECO:0000255" key="1"/>
<evidence type="ECO:0000269" key="2">
    <source>
    </source>
</evidence>
<evidence type="ECO:0000269" key="3">
    <source>
    </source>
</evidence>
<evidence type="ECO:0000269" key="4">
    <source>
    </source>
</evidence>
<evidence type="ECO:0000269" key="5">
    <source>
    </source>
</evidence>
<evidence type="ECO:0000269" key="6">
    <source>
    </source>
</evidence>
<evidence type="ECO:0000269" key="7">
    <source>
    </source>
</evidence>
<evidence type="ECO:0000269" key="8">
    <source>
    </source>
</evidence>
<evidence type="ECO:0000269" key="9">
    <source>
    </source>
</evidence>
<evidence type="ECO:0000269" key="10">
    <source>
    </source>
</evidence>
<evidence type="ECO:0000269" key="11">
    <source>
    </source>
</evidence>
<evidence type="ECO:0000269" key="12">
    <source>
    </source>
</evidence>
<evidence type="ECO:0000269" key="13">
    <source>
    </source>
</evidence>
<evidence type="ECO:0000269" key="14">
    <source>
    </source>
</evidence>
<evidence type="ECO:0000269" key="15">
    <source>
    </source>
</evidence>
<evidence type="ECO:0000269" key="16">
    <source>
    </source>
</evidence>
<evidence type="ECO:0000269" key="17">
    <source>
    </source>
</evidence>
<evidence type="ECO:0000269" key="18">
    <source>
    </source>
</evidence>
<evidence type="ECO:0000269" key="19">
    <source>
    </source>
</evidence>
<evidence type="ECO:0000269" key="20">
    <source>
    </source>
</evidence>
<evidence type="ECO:0000269" key="21">
    <source>
    </source>
</evidence>
<evidence type="ECO:0000269" key="22">
    <source>
    </source>
</evidence>
<evidence type="ECO:0000269" key="23">
    <source>
    </source>
</evidence>
<evidence type="ECO:0000269" key="24">
    <source>
    </source>
</evidence>
<evidence type="ECO:0000269" key="25">
    <source>
    </source>
</evidence>
<evidence type="ECO:0000269" key="26">
    <source>
    </source>
</evidence>
<evidence type="ECO:0000269" key="27">
    <source>
    </source>
</evidence>
<evidence type="ECO:0000269" key="28">
    <source>
    </source>
</evidence>
<evidence type="ECO:0000269" key="29">
    <source ref="3"/>
</evidence>
<evidence type="ECO:0000303" key="30">
    <source>
    </source>
</evidence>
<evidence type="ECO:0000303" key="31">
    <source>
    </source>
</evidence>
<evidence type="ECO:0000303" key="32">
    <source>
    </source>
</evidence>
<evidence type="ECO:0000303" key="33">
    <source>
    </source>
</evidence>
<evidence type="ECO:0000303" key="34">
    <source>
    </source>
</evidence>
<evidence type="ECO:0000303" key="35">
    <source>
    </source>
</evidence>
<evidence type="ECO:0000305" key="36"/>
<evidence type="ECO:0000305" key="37">
    <source>
    </source>
</evidence>
<evidence type="ECO:0007744" key="38">
    <source>
        <dbReference type="PDB" id="3AY4"/>
    </source>
</evidence>
<evidence type="ECO:0007744" key="39">
    <source>
        <dbReference type="PDB" id="3SGJ"/>
    </source>
</evidence>
<evidence type="ECO:0007744" key="40">
    <source>
        <dbReference type="PDB" id="3SGK"/>
    </source>
</evidence>
<evidence type="ECO:0007829" key="41">
    <source>
        <dbReference type="PDB" id="3SGJ"/>
    </source>
</evidence>
<evidence type="ECO:0007829" key="42">
    <source>
        <dbReference type="PDB" id="7SEG"/>
    </source>
</evidence>
<evidence type="ECO:0007829" key="43">
    <source>
        <dbReference type="PDB" id="7URU"/>
    </source>
</evidence>
<accession>P08637</accession>
<accession>A2N6W9</accession>
<accession>Q53FJ0</accession>
<accession>Q53FL6</accession>
<accession>Q5EBR4</accession>
<accession>Q65ZM6</accession>
<accession>Q6PIJ0</accession>
<gene>
    <name evidence="31" type="primary">FCGR3A</name>
    <name evidence="33" type="synonym">CD16A</name>
    <name type="synonym">FCG3</name>
    <name type="synonym">FCGR3</name>
    <name type="synonym">IGFR3</name>
</gene>
<reference key="1">
    <citation type="journal article" date="1989" name="J. Exp. Med.">
        <title>Alternative membrane forms of Fc gamma RIII(CD16) on human natural killer cells and neutrophils. Cell type-specific expression of two genes that differ in single nucleotide substitutions.</title>
        <authorList>
            <person name="Ravetch J.V."/>
            <person name="Perussia B."/>
        </authorList>
    </citation>
    <scope>NUCLEOTIDE SEQUENCE [MRNA]</scope>
    <scope>TISSUE SPECIFICITY</scope>
</reference>
<reference key="2">
    <citation type="journal article" date="2006" name="J. Immunol.">
        <title>IgG Fc receptor III homologues in nonhuman primate species: genetic characterization and ligand interactions.</title>
        <authorList>
            <person name="Rogers K.A."/>
            <person name="Scinicariello F."/>
            <person name="Attanasio R."/>
        </authorList>
    </citation>
    <scope>NUCLEOTIDE SEQUENCE [MRNA]</scope>
    <source>
        <tissue>Blood</tissue>
    </source>
</reference>
<reference key="3">
    <citation type="submission" date="2005-04" db="EMBL/GenBank/DDBJ databases">
        <authorList>
            <person name="Suzuki Y."/>
            <person name="Sugano S."/>
            <person name="Totoki Y."/>
            <person name="Toyoda A."/>
            <person name="Takeda T."/>
            <person name="Sakaki Y."/>
            <person name="Tanaka A."/>
            <person name="Yokoyama S."/>
        </authorList>
    </citation>
    <scope>NUCLEOTIDE SEQUENCE [LARGE SCALE MRNA]</scope>
    <scope>VARIANT VAL-176</scope>
    <source>
        <tissue>Synovium</tissue>
    </source>
</reference>
<reference key="4">
    <citation type="journal article" date="2006" name="Nature">
        <title>The DNA sequence and biological annotation of human chromosome 1.</title>
        <authorList>
            <person name="Gregory S.G."/>
            <person name="Barlow K.F."/>
            <person name="McLay K.E."/>
            <person name="Kaul R."/>
            <person name="Swarbreck D."/>
            <person name="Dunham A."/>
            <person name="Scott C.E."/>
            <person name="Howe K.L."/>
            <person name="Woodfine K."/>
            <person name="Spencer C.C.A."/>
            <person name="Jones M.C."/>
            <person name="Gillson C."/>
            <person name="Searle S."/>
            <person name="Zhou Y."/>
            <person name="Kokocinski F."/>
            <person name="McDonald L."/>
            <person name="Evans R."/>
            <person name="Phillips K."/>
            <person name="Atkinson A."/>
            <person name="Cooper R."/>
            <person name="Jones C."/>
            <person name="Hall R.E."/>
            <person name="Andrews T.D."/>
            <person name="Lloyd C."/>
            <person name="Ainscough R."/>
            <person name="Almeida J.P."/>
            <person name="Ambrose K.D."/>
            <person name="Anderson F."/>
            <person name="Andrew R.W."/>
            <person name="Ashwell R.I.S."/>
            <person name="Aubin K."/>
            <person name="Babbage A.K."/>
            <person name="Bagguley C.L."/>
            <person name="Bailey J."/>
            <person name="Beasley H."/>
            <person name="Bethel G."/>
            <person name="Bird C.P."/>
            <person name="Bray-Allen S."/>
            <person name="Brown J.Y."/>
            <person name="Brown A.J."/>
            <person name="Buckley D."/>
            <person name="Burton J."/>
            <person name="Bye J."/>
            <person name="Carder C."/>
            <person name="Chapman J.C."/>
            <person name="Clark S.Y."/>
            <person name="Clarke G."/>
            <person name="Clee C."/>
            <person name="Cobley V."/>
            <person name="Collier R.E."/>
            <person name="Corby N."/>
            <person name="Coville G.J."/>
            <person name="Davies J."/>
            <person name="Deadman R."/>
            <person name="Dunn M."/>
            <person name="Earthrowl M."/>
            <person name="Ellington A.G."/>
            <person name="Errington H."/>
            <person name="Frankish A."/>
            <person name="Frankland J."/>
            <person name="French L."/>
            <person name="Garner P."/>
            <person name="Garnett J."/>
            <person name="Gay L."/>
            <person name="Ghori M.R.J."/>
            <person name="Gibson R."/>
            <person name="Gilby L.M."/>
            <person name="Gillett W."/>
            <person name="Glithero R.J."/>
            <person name="Grafham D.V."/>
            <person name="Griffiths C."/>
            <person name="Griffiths-Jones S."/>
            <person name="Grocock R."/>
            <person name="Hammond S."/>
            <person name="Harrison E.S.I."/>
            <person name="Hart E."/>
            <person name="Haugen E."/>
            <person name="Heath P.D."/>
            <person name="Holmes S."/>
            <person name="Holt K."/>
            <person name="Howden P.J."/>
            <person name="Hunt A.R."/>
            <person name="Hunt S.E."/>
            <person name="Hunter G."/>
            <person name="Isherwood J."/>
            <person name="James R."/>
            <person name="Johnson C."/>
            <person name="Johnson D."/>
            <person name="Joy A."/>
            <person name="Kay M."/>
            <person name="Kershaw J.K."/>
            <person name="Kibukawa M."/>
            <person name="Kimberley A.M."/>
            <person name="King A."/>
            <person name="Knights A.J."/>
            <person name="Lad H."/>
            <person name="Laird G."/>
            <person name="Lawlor S."/>
            <person name="Leongamornlert D.A."/>
            <person name="Lloyd D.M."/>
            <person name="Loveland J."/>
            <person name="Lovell J."/>
            <person name="Lush M.J."/>
            <person name="Lyne R."/>
            <person name="Martin S."/>
            <person name="Mashreghi-Mohammadi M."/>
            <person name="Matthews L."/>
            <person name="Matthews N.S.W."/>
            <person name="McLaren S."/>
            <person name="Milne S."/>
            <person name="Mistry S."/>
            <person name="Moore M.J.F."/>
            <person name="Nickerson T."/>
            <person name="O'Dell C.N."/>
            <person name="Oliver K."/>
            <person name="Palmeiri A."/>
            <person name="Palmer S.A."/>
            <person name="Parker A."/>
            <person name="Patel D."/>
            <person name="Pearce A.V."/>
            <person name="Peck A.I."/>
            <person name="Pelan S."/>
            <person name="Phelps K."/>
            <person name="Phillimore B.J."/>
            <person name="Plumb R."/>
            <person name="Rajan J."/>
            <person name="Raymond C."/>
            <person name="Rouse G."/>
            <person name="Saenphimmachak C."/>
            <person name="Sehra H.K."/>
            <person name="Sheridan E."/>
            <person name="Shownkeen R."/>
            <person name="Sims S."/>
            <person name="Skuce C.D."/>
            <person name="Smith M."/>
            <person name="Steward C."/>
            <person name="Subramanian S."/>
            <person name="Sycamore N."/>
            <person name="Tracey A."/>
            <person name="Tromans A."/>
            <person name="Van Helmond Z."/>
            <person name="Wall M."/>
            <person name="Wallis J.M."/>
            <person name="White S."/>
            <person name="Whitehead S.L."/>
            <person name="Wilkinson J.E."/>
            <person name="Willey D.L."/>
            <person name="Williams H."/>
            <person name="Wilming L."/>
            <person name="Wray P.W."/>
            <person name="Wu Z."/>
            <person name="Coulson A."/>
            <person name="Vaudin M."/>
            <person name="Sulston J.E."/>
            <person name="Durbin R.M."/>
            <person name="Hubbard T."/>
            <person name="Wooster R."/>
            <person name="Dunham I."/>
            <person name="Carter N.P."/>
            <person name="McVean G."/>
            <person name="Ross M.T."/>
            <person name="Harrow J."/>
            <person name="Olson M.V."/>
            <person name="Beck S."/>
            <person name="Rogers J."/>
            <person name="Bentley D.R."/>
        </authorList>
    </citation>
    <scope>NUCLEOTIDE SEQUENCE [LARGE SCALE GENOMIC DNA]</scope>
</reference>
<reference key="5">
    <citation type="journal article" date="2004" name="Genome Res.">
        <title>The status, quality, and expansion of the NIH full-length cDNA project: the Mammalian Gene Collection (MGC).</title>
        <authorList>
            <consortium name="The MGC Project Team"/>
        </authorList>
    </citation>
    <scope>NUCLEOTIDE SEQUENCE [LARGE SCALE MRNA]</scope>
    <scope>VARIANT VAL-176</scope>
    <source>
        <tissue>Lung</tissue>
    </source>
</reference>
<reference key="6">
    <citation type="journal article" date="1995" name="J. Biol. Chem.">
        <title>The human low affinity immunoglobulin G Fc receptor III-A and III-B genes. Molecular characterization of the promoter regions.</title>
        <authorList>
            <person name="Gessner J.E."/>
            <person name="Grussenmeyer T."/>
            <person name="Kolanus W."/>
            <person name="Schmidt R.E."/>
        </authorList>
    </citation>
    <scope>NUCLEOTIDE SEQUENCE [GENOMIC DNA] OF 1-39</scope>
    <source>
        <tissue>Placenta</tissue>
    </source>
</reference>
<reference key="7">
    <citation type="journal article" date="1994" name="Kidney Int.">
        <title>Human glomerular mesangial cells express CD16 and may be stimulated via this receptor.</title>
        <authorList>
            <person name="Morcos M."/>
            <person name="Hansch G.M."/>
            <person name="Schonermark M."/>
            <person name="Ellwanger S."/>
            <person name="Harle M."/>
            <person name="Heckl-Ostreicher B."/>
        </authorList>
    </citation>
    <scope>NUCLEOTIDE SEQUENCE [MRNA] OF 22-254</scope>
    <scope>VARIANT VAL-176</scope>
</reference>
<reference key="8">
    <citation type="journal article" date="1989" name="Proc. Natl. Acad. Sci. U.S.A.">
        <title>A human immunoglobulin G receptor exists in both polypeptide-anchored and phosphatidylinositol-glycan-anchored forms.</title>
        <authorList>
            <person name="Scallon B.J."/>
            <person name="Scigliano E."/>
            <person name="Freedman V.H."/>
            <person name="Miedel M.C."/>
            <person name="Pan Y.C."/>
            <person name="Unkeless J.C."/>
            <person name="Kochan J.P."/>
        </authorList>
    </citation>
    <scope>NUCLEOTIDE SEQUENCE [MRNA] OF 31-254</scope>
    <source>
        <tissue>Lung</tissue>
    </source>
</reference>
<reference key="9">
    <citation type="journal article" date="1989" name="Nature">
        <title>Co-association of CD3 zeta with a receptor (CD16) for IgG Fc on human natural killer cells.</title>
        <authorList>
            <person name="Lanier L.L."/>
            <person name="Yu G."/>
            <person name="Phillips J.H."/>
        </authorList>
    </citation>
    <scope>FUNCTION</scope>
    <scope>SUBUNIT</scope>
    <scope>INTERACTION WITH CD247</scope>
    <scope>SUBCELLULAR LOCATION</scope>
</reference>
<reference key="10">
    <citation type="journal article" date="1991" name="J. Immunol.">
        <title>Analysis of Fc gamma RIII (CD16) membrane expression and association with CD3 zeta and Fc epsilon RI-gamma by site-directed mutation.</title>
        <authorList>
            <person name="Lanier L.L."/>
            <person name="Yu G."/>
            <person name="Phillips J.H."/>
        </authorList>
    </citation>
    <scope>FUNCTION</scope>
    <scope>SUBUNIT</scope>
    <scope>INTERACTION WITH CD247 AND FCER1G</scope>
    <scope>SUBCELLULAR LOCATION</scope>
    <scope>MUTAGENESIS OF PHE-203</scope>
    <scope>VARIANT SER-203</scope>
</reference>
<reference key="11">
    <citation type="journal article" date="1994" name="Bull. World Health Organ.">
        <title>Nomenclature of Fc receptors. IUIS/WHO Subcommittee on Nomenclature of Fc receptors.</title>
        <authorList>
            <person name="Conrad D."/>
            <person name="Cooper M."/>
            <person name="Fridman W.H."/>
            <person name="Kinet J.P."/>
            <person name="Ravetch J."/>
        </authorList>
    </citation>
    <scope>NOMENCLATURE</scope>
</reference>
<reference key="12">
    <citation type="journal article" date="1999" name="J. Immunol.">
        <title>Quantitative analysis of the effect of CD16 ligation on human NK cell proliferation.</title>
        <authorList>
            <person name="Warren H.S."/>
            <person name="Kinnear B.F."/>
        </authorList>
    </citation>
    <scope>FUNCTION</scope>
</reference>
<reference key="13">
    <citation type="journal article" date="1999" name="Proc. Natl. Acad. Sci. U.S.A.">
        <title>Human CD16 as a lysis receptor mediating direct natural killer cell cytotoxicity.</title>
        <authorList>
            <person name="Mandelboim O."/>
            <person name="Malik P."/>
            <person name="Davis D.M."/>
            <person name="Jo C.H."/>
            <person name="Boyson J.E."/>
            <person name="Strominger J.L."/>
        </authorList>
    </citation>
    <scope>FUNCTION</scope>
</reference>
<reference key="14">
    <citation type="journal article" date="2001" name="J. Virol.">
        <title>Effector function activities of a panel of mutants of a broadly neutralizing antibody against human immunodeficiency virus type 1.</title>
        <authorList>
            <person name="Hezareh M."/>
            <person name="Hessell A.J."/>
            <person name="Jensen R.C."/>
            <person name="van de Winkel J.G."/>
            <person name="Parren P.W."/>
        </authorList>
    </citation>
    <scope>FUNCTION</scope>
    <scope>INTERACTION WITH IGHG1</scope>
</reference>
<reference key="15">
    <citation type="journal article" date="2012" name="J. Immunol.">
        <title>The unique cytoplasmic domain of human FcgammaRIIIA regulates receptor-mediated function.</title>
        <authorList>
            <person name="Li X."/>
            <person name="Baskin J.G."/>
            <person name="Mangan E.K."/>
            <person name="Su K."/>
            <person name="Gibson A.W."/>
            <person name="Ji C."/>
            <person name="Edberg J.C."/>
            <person name="Kimberly R.P."/>
        </authorList>
    </citation>
    <scope>FUNCTION</scope>
    <scope>INTERACTION WITH S100A4</scope>
    <scope>PHOSPHORYLATION AT SER-236 AND THR-237</scope>
    <scope>MUTAGENESIS OF 249-LYS--LYS-254 AND 235-SER--THR-237</scope>
</reference>
<reference key="16">
    <citation type="journal article" date="2014" name="J. Immunol.">
        <title>ADAM17-mediated shedding of FcgammaRIIIA on human NK cells: identification of the cleavage site and relationship with activation.</title>
        <authorList>
            <person name="Lajoie L."/>
            <person name="Congy-Jolivet N."/>
            <person name="Bolzec A."/>
            <person name="Gouilleux-Gruart V."/>
            <person name="Sicard E."/>
            <person name="Sung H.C."/>
            <person name="Peiretti F."/>
            <person name="Moreau T."/>
            <person name="Vie H."/>
            <person name="Clemenceau B."/>
            <person name="Thibault G."/>
        </authorList>
    </citation>
    <scope>PTM</scope>
    <scope>SITE</scope>
    <scope>SUBCELLULAR LOCATION</scope>
</reference>
<reference key="17">
    <citation type="journal article" date="2014" name="Nat. Med.">
        <title>Broadly neutralizing hemagglutinin stalk-specific antibodies require FcgammaR interactions for protection against influenza virus in vivo.</title>
        <authorList>
            <person name="DiLillo D.J."/>
            <person name="Tan G.S."/>
            <person name="Palese P."/>
            <person name="Ravetch J.V."/>
        </authorList>
    </citation>
    <scope>FUNCTION</scope>
</reference>
<reference key="18">
    <citation type="journal article" date="2015" name="Immunity">
        <title>Epigenetic modification and antibody-dependent expansion of memory-like NK cells in human cytomegalovirus-infected individuals.</title>
        <authorList>
            <person name="Lee J."/>
            <person name="Zhang T."/>
            <person name="Hwang I."/>
            <person name="Kim A."/>
            <person name="Nitschke L."/>
            <person name="Kim M."/>
            <person name="Scott J.M."/>
            <person name="Kamimura Y."/>
            <person name="Lanier L.L."/>
            <person name="Kim S."/>
        </authorList>
    </citation>
    <scope>FUNCTION</scope>
</reference>
<reference key="19">
    <citation type="journal article" date="2015" name="PLoS ONE">
        <title>Identification of an ADAM17 cleavage region in human CD16 (FcgammaRIII) and the engineering of a non-cleavable version of the receptor in NK cells.</title>
        <authorList>
            <person name="Jing Y."/>
            <person name="Ni Z."/>
            <person name="Wu J."/>
            <person name="Higgins L."/>
            <person name="Markowski T.W."/>
            <person name="Kaufman D.S."/>
            <person name="Walcheck B."/>
        </authorList>
    </citation>
    <scope>FUNCTION</scope>
    <scope>PTM</scope>
    <scope>SITE</scope>
    <scope>SUBCELLULAR LOCATION</scope>
    <scope>MUTAGENESIS OF SER-197</scope>
</reference>
<reference key="20">
    <citation type="journal article" date="2016" name="Sci. Rep.">
        <title>CD16 is indispensable for antibody-dependent cellular cytotoxicity by human monocytes.</title>
        <authorList>
            <person name="Yeap W.H."/>
            <person name="Wong K.L."/>
            <person name="Shimasaki N."/>
            <person name="Teo E.C."/>
            <person name="Quek J.K."/>
            <person name="Yong H.X."/>
            <person name="Diong C.P."/>
            <person name="Bertoletti A."/>
            <person name="Linn Y.C."/>
            <person name="Wong S.C."/>
        </authorList>
    </citation>
    <scope>FUNCTION</scope>
    <scope>TISSUE SPECIFICITY</scope>
    <scope>INDUCTION</scope>
</reference>
<reference key="21">
    <citation type="journal article" date="2017" name="Proc. Natl. Acad. Sci. U.S.A.">
        <title>Transmembrane features governing Fc receptor CD16A assembly with CD16A signaling adaptor molecules.</title>
        <authorList>
            <person name="Blazquez-Moreno A."/>
            <person name="Park S."/>
            <person name="Im W."/>
            <person name="Call M.J."/>
            <person name="Call M.E."/>
            <person name="Reyburn H.T."/>
        </authorList>
    </citation>
    <scope>FUNCTION</scope>
    <scope>INTERACTION WITH CD247 AND FCER1G</scope>
    <scope>SUBCELLULAR LOCATION</scope>
    <scope>SITE</scope>
    <scope>MUTAGENESIS OF GLN-208; SER-210; PHE-211; CYS-212; PHE-219; ASP-222; THR-223; TYR-226; PHE-227 AND SER-228</scope>
</reference>
<reference key="22">
    <citation type="journal article" date="2017" name="Science">
        <title>IgG antibodies to dengue enhanced for FcgammaRIIIA binding determine disease severity.</title>
        <authorList>
            <person name="Wang T.T."/>
            <person name="Sewatanon J."/>
            <person name="Memoli M.J."/>
            <person name="Wrammert J."/>
            <person name="Bournazos S."/>
            <person name="Bhaumik S.K."/>
            <person name="Pinsky B.A."/>
            <person name="Chokephaibulkit K."/>
            <person name="Onlamoon N."/>
            <person name="Pattanapanyasat K."/>
            <person name="Taubenberger J.K."/>
            <person name="Ahmed R."/>
            <person name="Ravetch J.V."/>
        </authorList>
    </citation>
    <scope>FUNCTION (MICROBIAL INFECTION)</scope>
</reference>
<reference key="23">
    <citation type="journal article" date="2018" name="J. Cell Biol.">
        <title>Shedding of CD16 disassembles the NK cell immune synapse and boosts serial engagement of target cells.</title>
        <authorList>
            <person name="Srpan K."/>
            <person name="Ambrose A."/>
            <person name="Karampatzakis A."/>
            <person name="Saeed M."/>
            <person name="Cartwright A.N.R."/>
            <person name="Guldevall K."/>
            <person name="De Matos G.D.S.C."/>
            <person name="Oenfelt B."/>
            <person name="Davis D.M."/>
        </authorList>
    </citation>
    <scope>FUNCTION</scope>
    <scope>SUBCELLULAR LOCATION</scope>
    <scope>PTM</scope>
    <scope>MUTAGENESIS OF SER-197</scope>
</reference>
<reference key="24">
    <citation type="journal article" date="2019" name="Front. Immunol.">
        <title>Evolutionary Story of the Low/Medium-Affinity IgG Fc Receptor Gene Cluster.</title>
        <authorList>
            <person name="Lejeune J."/>
            <person name="Brachet G."/>
            <person name="Watier H."/>
        </authorList>
    </citation>
    <scope>MISCELLANEOUS</scope>
</reference>
<reference key="25">
    <citation type="journal article" date="2021" name="Antib Ther">
        <title>Cross-species higher sensitivities of FcgammaRIIIA/FcgammaRIV to afucosylated IgG for enhanced ADCC.</title>
        <authorList>
            <person name="Mao C."/>
            <person name="Near R."/>
            <person name="Zhong X."/>
            <person name="Gao W."/>
        </authorList>
    </citation>
    <scope>FUNCTION</scope>
</reference>
<reference key="26">
    <citation type="journal article" date="2011" name="Genes Cells">
        <title>Structural basis for improved efficacy of therapeutic antibodies on defucosylation of their Fc glycans.</title>
        <authorList>
            <person name="Mizushima T."/>
            <person name="Yagi H."/>
            <person name="Takemoto E."/>
            <person name="Shibata-Koyama M."/>
            <person name="Isoda Y."/>
            <person name="Iida S."/>
            <person name="Masuda K."/>
            <person name="Satoh M."/>
            <person name="Kato K."/>
        </authorList>
    </citation>
    <scope>X-RAY CRYSTALLOGRAPHY (2.2 ANGSTROMS) OF 21-193 IN COMPLEX WITH IGHG1</scope>
    <scope>FUNCTION</scope>
    <scope>DISULFIDE BONDS</scope>
    <scope>GLYCOSYLATION AT ASN-63 AND ASN-180</scope>
</reference>
<reference key="27">
    <citation type="journal article" date="2011" name="Proc. Natl. Acad. Sci. U.S.A.">
        <title>Unique carbohydrate-carbohydrate interactions are required for high affinity binding between FcgammaRIII and antibodies lacking core fucose.</title>
        <authorList>
            <person name="Ferrara C."/>
            <person name="Grau S."/>
            <person name="Jager C."/>
            <person name="Sondermann P."/>
            <person name="Brunker P."/>
            <person name="Waldhauer I."/>
            <person name="Hennig M."/>
            <person name="Ruf A."/>
            <person name="Rufer A.C."/>
            <person name="Stihle M."/>
            <person name="Umana P."/>
            <person name="Benz J."/>
        </authorList>
    </citation>
    <scope>X-RAY CRYSTALLOGRAPHY (2.2 ANGSTROMS) OF 19-208 IN COMPLEX WITH IGHG1</scope>
    <scope>FUNCTION</scope>
    <scope>DISULFIDE BONDS</scope>
    <scope>GLYCOSYLATION AT ASN-63 AND ASN-180</scope>
</reference>
<reference key="28">
    <citation type="journal article" date="1996" name="J. Immunol.">
        <title>A triallelic Fc gamma receptor type IIIA polymorphism influences the binding of human IgG by NK cell Fc gamma RIIIa.</title>
        <authorList>
            <person name="de Haas M."/>
            <person name="Koene H.R."/>
            <person name="Kleijer M."/>
            <person name="de Vries E."/>
            <person name="Simsek S."/>
            <person name="van Tol M.J.D."/>
            <person name="Roos D."/>
            <person name="von dem Borne A.E.G.K."/>
        </authorList>
    </citation>
    <scope>INVOLVEMENT IN IMD20</scope>
    <scope>VARIANT IMD20 HIS-66</scope>
    <scope>VARIANT ARG-66</scope>
    <scope>FUNCTION</scope>
    <scope>SUBUNIT</scope>
</reference>
<reference key="29">
    <citation type="journal article" date="1997" name="Blood">
        <title>Fc gammaRIIIa-158V/F polymorphism influences the binding of IgG by natural killer cell Fc gammaRIIIa, independently of the Fc gammaRIIIa-48L/R/H phenotype.</title>
        <authorList>
            <person name="Koene H.R."/>
            <person name="Kleijer M."/>
            <person name="Algra J."/>
            <person name="Roos D."/>
            <person name="von dem Borne A.E.G.K."/>
            <person name="de Haas M."/>
        </authorList>
    </citation>
    <scope>VARIANT VAL-176</scope>
    <scope>FUNCTION</scope>
    <scope>SUBUNIT</scope>
</reference>
<reference key="30">
    <citation type="journal article" date="1997" name="J. Clin. Invest.">
        <title>A novel polymorphism of FcgammaRIIIa (CD16) alters receptor function and predisposes to autoimmune disease.</title>
        <authorList>
            <person name="Wu J."/>
            <person name="Edberg J.C."/>
            <person name="Redecha P.B."/>
            <person name="Bansal V."/>
            <person name="Guyre P.M."/>
            <person name="Coleman K."/>
            <person name="Salmon J.E."/>
            <person name="Kimberly R.P."/>
        </authorList>
    </citation>
    <scope>VARIANT VAL-176</scope>
</reference>
<reference key="31">
    <citation type="journal article" date="1996" name="Blood">
        <title>Identification of an unusual Fc gamma receptor IIIa (CD16) on natural killer cells in a patient with recurrent infections.</title>
        <authorList>
            <person name="de Vries E."/>
            <person name="Koene H.R."/>
            <person name="Vossen J.M."/>
            <person name="Gratama J.W."/>
            <person name="von dem Borne A.E."/>
            <person name="Waaijer J.L."/>
            <person name="Haraldsson A."/>
            <person name="de Haas M."/>
            <person name="van Tol M.J."/>
        </authorList>
    </citation>
    <scope>INVOLVEMENT IN IMD20</scope>
    <scope>VARIANT IMD20 HIS-66</scope>
</reference>
<reference key="32">
    <citation type="journal article" date="1996" name="Clin. Exp. Immunol.">
        <title>Natural Killer (NK) cell deficiency associated with an epitope-deficient Fc receptor type IIIA (CD16-II).</title>
        <authorList>
            <person name="Jawahar S."/>
            <person name="Moody C."/>
            <person name="Chan M."/>
            <person name="Finberg R."/>
            <person name="Geha R."/>
            <person name="Chatila T."/>
        </authorList>
    </citation>
    <scope>VARIANT IMD20 HIS-66</scope>
</reference>
<reference key="33">
    <citation type="journal article" date="2012" name="J. Clin. Invest.">
        <title>Human immunodeficiency-causing mutation defines CD16 in spontaneous NK cell cytotoxicity.</title>
        <authorList>
            <person name="Grier J.T."/>
            <person name="Forbes L.R."/>
            <person name="Monaco-Shawver L."/>
            <person name="Oshinsky J."/>
            <person name="Atkinson T.P."/>
            <person name="Moody C."/>
            <person name="Pandey R."/>
            <person name="Campbell K.S."/>
            <person name="Orange J.S."/>
        </authorList>
    </citation>
    <scope>VARIANT IMD20 HIS-66</scope>
    <scope>FUNCTION</scope>
    <scope>INTERACTION WITH CD2</scope>
    <scope>SUBCELLULAR LOCATION</scope>
</reference>
<keyword id="KW-0002">3D-structure</keyword>
<keyword id="KW-1003">Cell membrane</keyword>
<keyword id="KW-1015">Disulfide bond</keyword>
<keyword id="KW-0325">Glycoprotein</keyword>
<keyword id="KW-0390">IgG-binding protein</keyword>
<keyword id="KW-0391">Immunity</keyword>
<keyword id="KW-0393">Immunoglobulin domain</keyword>
<keyword id="KW-0472">Membrane</keyword>
<keyword id="KW-0597">Phosphoprotein</keyword>
<keyword id="KW-1267">Proteomics identification</keyword>
<keyword id="KW-0675">Receptor</keyword>
<keyword id="KW-1185">Reference proteome</keyword>
<keyword id="KW-0677">Repeat</keyword>
<keyword id="KW-0964">Secreted</keyword>
<keyword id="KW-0732">Signal</keyword>
<keyword id="KW-0812">Transmembrane</keyword>
<keyword id="KW-1133">Transmembrane helix</keyword>
<feature type="signal peptide" evidence="1">
    <location>
        <begin position="1"/>
        <end position="16"/>
    </location>
</feature>
<feature type="chain" id="PRO_0000015150" description="Low affinity immunoglobulin gamma Fc region receptor III-A">
    <location>
        <begin position="17"/>
        <end position="254"/>
    </location>
</feature>
<feature type="topological domain" description="Extracellular" evidence="1">
    <location>
        <begin position="17"/>
        <end position="208"/>
    </location>
</feature>
<feature type="transmembrane region" description="Helical" evidence="1">
    <location>
        <begin position="209"/>
        <end position="229"/>
    </location>
</feature>
<feature type="topological domain" description="Cytoplasmic" evidence="1">
    <location>
        <begin position="230"/>
        <end position="254"/>
    </location>
</feature>
<feature type="domain" description="Ig-like C2-type 1">
    <location>
        <begin position="24"/>
        <end position="105"/>
    </location>
</feature>
<feature type="domain" description="Ig-like C2-type 2">
    <location>
        <begin position="107"/>
        <end position="189"/>
    </location>
</feature>
<feature type="site" description="Cleavage; by ADAM17" evidence="10 15">
    <location>
        <begin position="195"/>
        <end position="196"/>
    </location>
</feature>
<feature type="site" description="Important for receptor turnover" evidence="18">
    <location>
        <position position="222"/>
    </location>
</feature>
<feature type="modified residue" description="Phosphoserine; by PKC" evidence="37">
    <location>
        <position position="236"/>
    </location>
</feature>
<feature type="modified residue" description="Phosphothreonine; by PKC" evidence="37">
    <location>
        <position position="237"/>
    </location>
</feature>
<feature type="glycosylation site" description="N-linked (GlcNAc...) asparagine" evidence="1">
    <location>
        <position position="56"/>
    </location>
</feature>
<feature type="glycosylation site" description="N-linked (GlcNAc...) asparagine" evidence="6 7">
    <location>
        <position position="63"/>
    </location>
</feature>
<feature type="glycosylation site" description="N-linked (GlcNAc...) asparagine" evidence="1">
    <location>
        <position position="92"/>
    </location>
</feature>
<feature type="glycosylation site" description="N-linked (GlcNAc...) asparagine" evidence="6 7">
    <location>
        <position position="180"/>
    </location>
</feature>
<feature type="glycosylation site" description="N-linked (GlcNAc...) asparagine" evidence="1">
    <location>
        <position position="187"/>
    </location>
</feature>
<feature type="disulfide bond" evidence="6 7 38 39 40">
    <location>
        <begin position="47"/>
        <end position="89"/>
    </location>
</feature>
<feature type="disulfide bond" evidence="6 7 38 39 40">
    <location>
        <begin position="128"/>
        <end position="172"/>
    </location>
</feature>
<feature type="sequence variant" id="VAR_008800" description="In IMD20; loss of interaction with CD2; dbSNP:rs10127939." evidence="8 23 24 25">
    <original>L</original>
    <variation>H</variation>
    <location>
        <position position="66"/>
    </location>
</feature>
<feature type="sequence variant" id="VAR_008799" description="In dbSNP:rs10127939." evidence="24">
    <original>L</original>
    <variation>R</variation>
    <location>
        <position position="66"/>
    </location>
</feature>
<feature type="sequence variant" id="VAR_058398" description="In dbSNP:rs443082.">
    <original>G</original>
    <variation>D</variation>
    <location>
        <position position="147"/>
    </location>
</feature>
<feature type="sequence variant" id="VAR_058399" description="In dbSNP:rs396716.">
    <original>Y</original>
    <variation>H</variation>
    <location>
        <position position="158"/>
    </location>
</feature>
<feature type="sequence variant" id="VAR_003960" description="Shows a higher binding capacity for IgG1, IgG3 and IgG4; dbSNP:rs396991." evidence="4 22 26 27 29">
    <original>F</original>
    <variation>V</variation>
    <location>
        <position position="176"/>
    </location>
</feature>
<feature type="sequence variant" id="VAR_058400" description="Enables membrane anchoring via glycosylphosphatidylinositol; disrupts transmembrane anchoring; dbSNP:rs1042206." evidence="5">
    <original>F</original>
    <variation>S</variation>
    <location>
        <position position="203"/>
    </location>
</feature>
<feature type="mutagenesis site" description="Impairs receptor shedding. Impairs the detachment of NK cells from opsonized target cells upon sequential activation." evidence="15 19">
    <original>S</original>
    <variation>P</variation>
    <location>
        <position position="197"/>
    </location>
</feature>
<feature type="mutagenesis site" description="Disrupts transmembrane anchoring." evidence="5">
    <original>F</original>
    <variation>P</variation>
    <location>
        <position position="203"/>
    </location>
</feature>
<feature type="mutagenesis site" description="Enables membrane anchoring via glycosylphosphatidylinositol. Disrupts transmembrane anchoring." evidence="5">
    <original>F</original>
    <variation>T</variation>
    <variation>Y</variation>
    <variation>N</variation>
    <variation>E</variation>
    <variation>A</variation>
    <variation>D</variation>
    <variation>K</variation>
    <location>
        <position position="203"/>
    </location>
</feature>
<feature type="mutagenesis site" description="Enables only transmembrane anchoring." evidence="5">
    <original>F</original>
    <variation>V</variation>
    <variation>I</variation>
    <variation>L</variation>
    <location>
        <position position="203"/>
    </location>
</feature>
<feature type="mutagenesis site" description="Decreases the association with either CD247 or FCER1G." evidence="18">
    <original>Q</original>
    <variation>A</variation>
    <location>
        <position position="208"/>
    </location>
</feature>
<feature type="mutagenesis site" description="Has no effect on complex association with CD247 or FCER1G. Decreases cell surface expression; when associated with A-211 and A-212." evidence="18">
    <original>S</original>
    <variation>A</variation>
    <location>
        <position position="210"/>
    </location>
</feature>
<feature type="mutagenesis site" description="Decreases the association with either CD247 or FCER1G. Decreases cell surface expression; when associated with A-210 and A-212." evidence="18">
    <original>F</original>
    <variation>A</variation>
    <location>
        <position position="211"/>
    </location>
</feature>
<feature type="mutagenesis site" description="Has no effect on complex formation with CD247 or FCER1G. Decreases cell surface expression; when associated with A-210 and A-211." evidence="18">
    <original>C</original>
    <variation>A</variation>
    <location>
        <position position="212"/>
    </location>
</feature>
<feature type="mutagenesis site" description="Decreases the association with either CD247 or FCER1G. Decreases cell surface expression." evidence="18">
    <original>F</original>
    <variation>A</variation>
    <location>
        <position position="219"/>
    </location>
</feature>
<feature type="mutagenesis site" description="Decreases the association with either CD247 or FCER1G. Strongly increases cell surface expression." evidence="18">
    <original>D</original>
    <variation>A</variation>
    <location>
        <position position="222"/>
    </location>
</feature>
<feature type="mutagenesis site" description="Strongly decreases complex formation with CD247 or FCER1G." evidence="18">
    <original>D</original>
    <variation>E</variation>
    <variation>K</variation>
    <location>
        <position position="222"/>
    </location>
</feature>
<feature type="mutagenesis site" description="Has little effect on complex formation with CD247 or FCER1G." evidence="18">
    <original>D</original>
    <variation>N</variation>
    <location>
        <position position="222"/>
    </location>
</feature>
<feature type="mutagenesis site" description="Decreases the association with either CD247 or FCER1G. Decreases cell surface expression." evidence="18">
    <original>T</original>
    <variation>A</variation>
    <location>
        <position position="223"/>
    </location>
</feature>
<feature type="mutagenesis site" description="Decreases the association with either CD247 or FCER1G. Decreases cell surface expression; when associated with A-227 and A-228." evidence="18">
    <original>Y</original>
    <variation>A</variation>
    <location>
        <position position="226"/>
    </location>
</feature>
<feature type="mutagenesis site" description="Decreases the association with either CD247 or FCER1G. Decreases cell surface expression; when associated with A-226 and A-228." evidence="18">
    <original>F</original>
    <variation>A</variation>
    <location>
        <position position="227"/>
    </location>
</feature>
<feature type="mutagenesis site" description="Has little effect on complex formation with CD247 or FCER1G. Decreases cell surface expression; when associated with A-226 and A-227." evidence="18">
    <original>S</original>
    <variation>A</variation>
    <location>
        <position position="228"/>
    </location>
</feature>
<feature type="mutagenesis site" description="Loss of PKC-dependent phosphorylation. Abolishes pro-inflammatory cytokine production while enhancing cell degranulation." evidence="9">
    <original>SST</original>
    <variation>AAA</variation>
    <location>
        <begin position="235"/>
        <end position="237"/>
    </location>
</feature>
<feature type="mutagenesis site" description="Impairs the interaction with S100A4." evidence="9">
    <location>
        <begin position="249"/>
        <end position="254"/>
    </location>
</feature>
<feature type="sequence conflict" description="In Ref. 3; BAD96988/BAD97015." evidence="36" ref="3">
    <original>I</original>
    <variation>V</variation>
    <location>
        <position position="106"/>
    </location>
</feature>
<feature type="sequence conflict" description="In Ref. 5; AAH33678." evidence="36" ref="5">
    <original>A</original>
    <variation>S</variation>
    <location>
        <position position="195"/>
    </location>
</feature>
<feature type="strand" evidence="42">
    <location>
        <begin position="27"/>
        <end position="33"/>
    </location>
</feature>
<feature type="strand" evidence="42">
    <location>
        <begin position="35"/>
        <end position="38"/>
    </location>
</feature>
<feature type="strand" evidence="42">
    <location>
        <begin position="43"/>
        <end position="48"/>
    </location>
</feature>
<feature type="strand" evidence="41">
    <location>
        <begin position="51"/>
        <end position="54"/>
    </location>
</feature>
<feature type="strand" evidence="42">
    <location>
        <begin position="59"/>
        <end position="62"/>
    </location>
</feature>
<feature type="strand" evidence="41">
    <location>
        <begin position="65"/>
        <end position="68"/>
    </location>
</feature>
<feature type="strand" evidence="42">
    <location>
        <begin position="71"/>
        <end position="78"/>
    </location>
</feature>
<feature type="helix" evidence="42">
    <location>
        <begin position="81"/>
        <end position="83"/>
    </location>
</feature>
<feature type="strand" evidence="42">
    <location>
        <begin position="85"/>
        <end position="91"/>
    </location>
</feature>
<feature type="strand" evidence="43">
    <location>
        <begin position="94"/>
        <end position="98"/>
    </location>
</feature>
<feature type="strand" evidence="42">
    <location>
        <begin position="100"/>
        <end position="105"/>
    </location>
</feature>
<feature type="strand" evidence="42">
    <location>
        <begin position="107"/>
        <end position="112"/>
    </location>
</feature>
<feature type="strand" evidence="42">
    <location>
        <begin position="116"/>
        <end position="119"/>
    </location>
</feature>
<feature type="strand" evidence="42">
    <location>
        <begin position="124"/>
        <end position="130"/>
    </location>
</feature>
<feature type="helix" evidence="42">
    <location>
        <begin position="131"/>
        <end position="133"/>
    </location>
</feature>
<feature type="strand" evidence="42">
    <location>
        <begin position="136"/>
        <end position="143"/>
    </location>
</feature>
<feature type="strand" evidence="42">
    <location>
        <begin position="146"/>
        <end position="153"/>
    </location>
</feature>
<feature type="strand" evidence="42">
    <location>
        <begin position="157"/>
        <end position="161"/>
    </location>
</feature>
<feature type="helix" evidence="42">
    <location>
        <begin position="164"/>
        <end position="166"/>
    </location>
</feature>
<feature type="strand" evidence="42">
    <location>
        <begin position="168"/>
        <end position="176"/>
    </location>
</feature>
<feature type="strand" evidence="42">
    <location>
        <begin position="179"/>
        <end position="182"/>
    </location>
</feature>
<feature type="strand" evidence="42">
    <location>
        <begin position="186"/>
        <end position="191"/>
    </location>
</feature>
<dbReference type="EMBL" id="X52645">
    <property type="protein sequence ID" value="CAA36870.1"/>
    <property type="molecule type" value="mRNA"/>
</dbReference>
<dbReference type="EMBL" id="AK223268">
    <property type="protein sequence ID" value="BAD96988.1"/>
    <property type="status" value="ALT_INIT"/>
    <property type="molecule type" value="mRNA"/>
</dbReference>
<dbReference type="EMBL" id="AK223295">
    <property type="protein sequence ID" value="BAD97015.1"/>
    <property type="status" value="ALT_INIT"/>
    <property type="molecule type" value="mRNA"/>
</dbReference>
<dbReference type="EMBL" id="AL590385">
    <property type="status" value="NOT_ANNOTATED_CDS"/>
    <property type="molecule type" value="Genomic_DNA"/>
</dbReference>
<dbReference type="EMBL" id="BC017865">
    <property type="protein sequence ID" value="AAH17865.1"/>
    <property type="molecule type" value="mRNA"/>
</dbReference>
<dbReference type="EMBL" id="BC033678">
    <property type="protein sequence ID" value="AAH33678.1"/>
    <property type="molecule type" value="mRNA"/>
</dbReference>
<dbReference type="EMBL" id="Z46222">
    <property type="protein sequence ID" value="CAA86295.1"/>
    <property type="molecule type" value="Genomic_DNA"/>
</dbReference>
<dbReference type="EMBL" id="S76824">
    <property type="protein sequence ID" value="AAB33925.2"/>
    <property type="molecule type" value="mRNA"/>
</dbReference>
<dbReference type="EMBL" id="M24853">
    <property type="protein sequence ID" value="AAA53506.1"/>
    <property type="molecule type" value="mRNA"/>
</dbReference>
<dbReference type="CCDS" id="CCDS44266.1"/>
<dbReference type="PIR" id="JL0107">
    <property type="entry name" value="JL0107"/>
</dbReference>
<dbReference type="RefSeq" id="NP_000560.6">
    <property type="nucleotide sequence ID" value="NM_000569.7"/>
</dbReference>
<dbReference type="RefSeq" id="NP_001121064.2">
    <property type="nucleotide sequence ID" value="NM_001127592.2"/>
</dbReference>
<dbReference type="RefSeq" id="NP_001121065.1">
    <property type="nucleotide sequence ID" value="NM_001127593.1"/>
</dbReference>
<dbReference type="RefSeq" id="NP_001121067.1">
    <property type="nucleotide sequence ID" value="NM_001127595.2"/>
</dbReference>
<dbReference type="RefSeq" id="NP_001121068.1">
    <property type="nucleotide sequence ID" value="NM_001127596.1"/>
</dbReference>
<dbReference type="RefSeq" id="NP_001316049.1">
    <property type="nucleotide sequence ID" value="NM_001329120.2"/>
</dbReference>
<dbReference type="PDB" id="3AY4">
    <property type="method" value="X-ray"/>
    <property type="resolution" value="2.20 A"/>
    <property type="chains" value="C=21-193"/>
</dbReference>
<dbReference type="PDB" id="3SGJ">
    <property type="method" value="X-ray"/>
    <property type="resolution" value="2.20 A"/>
    <property type="chains" value="C=19-208"/>
</dbReference>
<dbReference type="PDB" id="3SGK">
    <property type="method" value="X-ray"/>
    <property type="resolution" value="2.40 A"/>
    <property type="chains" value="C=19-208"/>
</dbReference>
<dbReference type="PDB" id="3WN5">
    <property type="method" value="X-ray"/>
    <property type="resolution" value="2.78 A"/>
    <property type="chains" value="C/F=18-208"/>
</dbReference>
<dbReference type="PDB" id="5BW7">
    <property type="method" value="X-ray"/>
    <property type="resolution" value="3.00 A"/>
    <property type="chains" value="C=21-193"/>
</dbReference>
<dbReference type="PDB" id="5D6D">
    <property type="method" value="X-ray"/>
    <property type="resolution" value="3.13 A"/>
    <property type="chains" value="C=14-205"/>
</dbReference>
<dbReference type="PDB" id="5ML9">
    <property type="method" value="X-ray"/>
    <property type="resolution" value="2.35 A"/>
    <property type="chains" value="A=19-193"/>
</dbReference>
<dbReference type="PDB" id="5MN2">
    <property type="method" value="X-ray"/>
    <property type="resolution" value="2.35 A"/>
    <property type="chains" value="A/B=19-193"/>
</dbReference>
<dbReference type="PDB" id="5VU0">
    <property type="method" value="X-ray"/>
    <property type="resolution" value="2.26 A"/>
    <property type="chains" value="C=22-192"/>
</dbReference>
<dbReference type="PDB" id="5XJE">
    <property type="method" value="X-ray"/>
    <property type="resolution" value="2.40 A"/>
    <property type="chains" value="C=21-193"/>
</dbReference>
<dbReference type="PDB" id="5XJF">
    <property type="method" value="X-ray"/>
    <property type="resolution" value="2.50 A"/>
    <property type="chains" value="C=21-193"/>
</dbReference>
<dbReference type="PDB" id="5YC5">
    <property type="method" value="X-ray"/>
    <property type="resolution" value="2.71 A"/>
    <property type="chains" value="C=19-193"/>
</dbReference>
<dbReference type="PDB" id="7SEG">
    <property type="method" value="X-ray"/>
    <property type="resolution" value="2.16 A"/>
    <property type="chains" value="C/D=16-193"/>
</dbReference>
<dbReference type="PDB" id="7URU">
    <property type="method" value="X-ray"/>
    <property type="resolution" value="2.40 A"/>
    <property type="chains" value="C=19-193"/>
</dbReference>
<dbReference type="PDBsum" id="3AY4"/>
<dbReference type="PDBsum" id="3SGJ"/>
<dbReference type="PDBsum" id="3SGK"/>
<dbReference type="PDBsum" id="3WN5"/>
<dbReference type="PDBsum" id="5BW7"/>
<dbReference type="PDBsum" id="5D6D"/>
<dbReference type="PDBsum" id="5ML9"/>
<dbReference type="PDBsum" id="5MN2"/>
<dbReference type="PDBsum" id="5VU0"/>
<dbReference type="PDBsum" id="5XJE"/>
<dbReference type="PDBsum" id="5XJF"/>
<dbReference type="PDBsum" id="5YC5"/>
<dbReference type="PDBsum" id="7SEG"/>
<dbReference type="PDBsum" id="7URU"/>
<dbReference type="SMR" id="P08637"/>
<dbReference type="BioGRID" id="108508">
    <property type="interactions" value="33"/>
</dbReference>
<dbReference type="FunCoup" id="P08637">
    <property type="interactions" value="412"/>
</dbReference>
<dbReference type="IntAct" id="P08637">
    <property type="interactions" value="22"/>
</dbReference>
<dbReference type="MINT" id="P08637"/>
<dbReference type="STRING" id="9606.ENSP00000356946"/>
<dbReference type="ChEMBL" id="CHEMBL3856162"/>
<dbReference type="DrugBank" id="DB00092">
    <property type="generic name" value="Alefacept"/>
</dbReference>
<dbReference type="DrugBank" id="DB00087">
    <property type="generic name" value="Alemtuzumab"/>
</dbReference>
<dbReference type="DrugBank" id="DB16695">
    <property type="generic name" value="Amivantamab"/>
</dbReference>
<dbReference type="DrugBank" id="DB12023">
    <property type="generic name" value="Benralizumab"/>
</dbReference>
<dbReference type="DrugBank" id="DB00112">
    <property type="generic name" value="Bevacizumab"/>
</dbReference>
<dbReference type="DrugBank" id="DB06607">
    <property type="generic name" value="Catumaxomab"/>
</dbReference>
<dbReference type="DrugBank" id="DB00002">
    <property type="generic name" value="Cetuximab"/>
</dbReference>
<dbReference type="DrugBank" id="DB00111">
    <property type="generic name" value="Daclizumab"/>
</dbReference>
<dbReference type="DrugBank" id="DB00005">
    <property type="generic name" value="Etanercept"/>
</dbReference>
<dbReference type="DrugBank" id="DB00056">
    <property type="generic name" value="Gemtuzumab ozogamicin"/>
</dbReference>
<dbReference type="DrugBank" id="DB00028">
    <property type="generic name" value="Human immunoglobulin G"/>
</dbReference>
<dbReference type="DrugBank" id="DB00110">
    <property type="generic name" value="Palivizumab"/>
</dbReference>
<dbReference type="DrugBank" id="DB11767">
    <property type="generic name" value="Sarilumab"/>
</dbReference>
<dbReference type="DrugCentral" id="P08637"/>
<dbReference type="GuidetoPHARMACOLOGY" id="3017"/>
<dbReference type="TCDB" id="8.A.23.2.6">
    <property type="family name" value="the basigin (basigin) family"/>
</dbReference>
<dbReference type="GlyConnect" id="3000">
    <property type="glycosylation" value="86 N-Linked glycans (5 sites)"/>
</dbReference>
<dbReference type="GlyCosmos" id="P08637">
    <property type="glycosylation" value="5 sites, No reported glycans"/>
</dbReference>
<dbReference type="GlyGen" id="P08637">
    <property type="glycosylation" value="7 sites, 99 N-linked glycans (6 sites)"/>
</dbReference>
<dbReference type="iPTMnet" id="P08637"/>
<dbReference type="PhosphoSitePlus" id="P08637"/>
<dbReference type="BioMuta" id="FCGR3A"/>
<dbReference type="DMDM" id="119876"/>
<dbReference type="MassIVE" id="P08637"/>
<dbReference type="PaxDb" id="9606-ENSP00000356946"/>
<dbReference type="PeptideAtlas" id="P08637"/>
<dbReference type="ProteomicsDB" id="52146"/>
<dbReference type="TopDownProteomics" id="P08637"/>
<dbReference type="ABCD" id="P08637">
    <property type="antibodies" value="8 sequenced antibodies"/>
</dbReference>
<dbReference type="Antibodypedia" id="20512">
    <property type="antibodies" value="2699 antibodies from 50 providers"/>
</dbReference>
<dbReference type="DNASU" id="2214"/>
<dbReference type="Ensembl" id="ENST00000367967.8">
    <property type="protein sequence ID" value="ENSP00000356944.3"/>
    <property type="gene ID" value="ENSG00000203747.13"/>
</dbReference>
<dbReference type="Ensembl" id="ENST00000436743.7">
    <property type="protein sequence ID" value="ENSP00000416607.1"/>
    <property type="gene ID" value="ENSG00000203747.13"/>
</dbReference>
<dbReference type="Ensembl" id="ENST00000443193.6">
    <property type="protein sequence ID" value="ENSP00000392047.2"/>
    <property type="gene ID" value="ENSG00000203747.13"/>
</dbReference>
<dbReference type="Ensembl" id="ENST00000699395.1">
    <property type="protein sequence ID" value="ENSP00000514356.1"/>
    <property type="gene ID" value="ENSG00000203747.13"/>
</dbReference>
<dbReference type="Ensembl" id="ENST00000699396.1">
    <property type="protein sequence ID" value="ENSP00000514357.1"/>
    <property type="gene ID" value="ENSG00000203747.13"/>
</dbReference>
<dbReference type="Ensembl" id="ENST00000699397.1">
    <property type="protein sequence ID" value="ENSP00000514358.1"/>
    <property type="gene ID" value="ENSG00000203747.13"/>
</dbReference>
<dbReference type="GeneID" id="2214"/>
<dbReference type="KEGG" id="hsa:2214"/>
<dbReference type="MANE-Select" id="ENST00000443193.6">
    <property type="protein sequence ID" value="ENSP00000392047.2"/>
    <property type="RefSeq nucleotide sequence ID" value="NM_000569.8"/>
    <property type="RefSeq protein sequence ID" value="NP_000560.7"/>
</dbReference>
<dbReference type="UCSC" id="uc001gat.5">
    <property type="organism name" value="human"/>
</dbReference>
<dbReference type="AGR" id="HGNC:3619"/>
<dbReference type="CTD" id="2214"/>
<dbReference type="DisGeNET" id="2214"/>
<dbReference type="GeneCards" id="FCGR3A"/>
<dbReference type="HGNC" id="HGNC:3619">
    <property type="gene designation" value="FCGR3A"/>
</dbReference>
<dbReference type="HPA" id="ENSG00000203747">
    <property type="expression patterns" value="Tissue enhanced (lung, lymphoid tissue)"/>
</dbReference>
<dbReference type="MalaCards" id="FCGR3A"/>
<dbReference type="MIM" id="146740">
    <property type="type" value="gene"/>
</dbReference>
<dbReference type="MIM" id="615707">
    <property type="type" value="phenotype"/>
</dbReference>
<dbReference type="neXtProt" id="NX_P08637"/>
<dbReference type="OpenTargets" id="ENSG00000203747"/>
<dbReference type="Orphanet" id="437552">
    <property type="disease" value="Autosomal recessive primary immunodeficiency with defective spontaneous natural killer cell cytotoxicity"/>
</dbReference>
<dbReference type="PharmGKB" id="PA28065"/>
<dbReference type="VEuPathDB" id="HostDB:ENSG00000203747"/>
<dbReference type="eggNOG" id="ENOG502RU1M">
    <property type="taxonomic scope" value="Eukaryota"/>
</dbReference>
<dbReference type="GeneTree" id="ENSGT01050000244808"/>
<dbReference type="HOGENOM" id="CLU_023383_1_0_1"/>
<dbReference type="InParanoid" id="P08637"/>
<dbReference type="OMA" id="GDNSTQW"/>
<dbReference type="OrthoDB" id="8917564at2759"/>
<dbReference type="PAN-GO" id="P08637">
    <property type="GO annotations" value="4 GO annotations based on evolutionary models"/>
</dbReference>
<dbReference type="PhylomeDB" id="P08637"/>
<dbReference type="PathwayCommons" id="P08637"/>
<dbReference type="Reactome" id="R-HSA-198933">
    <property type="pathway name" value="Immunoregulatory interactions between a Lymphoid and a non-Lymphoid cell"/>
</dbReference>
<dbReference type="Reactome" id="R-HSA-2029481">
    <property type="pathway name" value="FCGR activation"/>
</dbReference>
<dbReference type="Reactome" id="R-HSA-2029482">
    <property type="pathway name" value="Regulation of actin dynamics for phagocytic cup formation"/>
</dbReference>
<dbReference type="Reactome" id="R-HSA-2029485">
    <property type="pathway name" value="Role of phospholipids in phagocytosis"/>
</dbReference>
<dbReference type="Reactome" id="R-HSA-9664323">
    <property type="pathway name" value="FCGR3A-mediated IL10 synthesis"/>
</dbReference>
<dbReference type="Reactome" id="R-HSA-9664422">
    <property type="pathway name" value="FCGR3A-mediated phagocytosis"/>
</dbReference>
<dbReference type="SignaLink" id="P08637"/>
<dbReference type="SIGNOR" id="P08637"/>
<dbReference type="BioGRID-ORCS" id="2214">
    <property type="hits" value="12 hits in 1067 CRISPR screens"/>
</dbReference>
<dbReference type="ChiTaRS" id="FCGR3A">
    <property type="organism name" value="human"/>
</dbReference>
<dbReference type="EvolutionaryTrace" id="P08637"/>
<dbReference type="GeneWiki" id="FCGR3A"/>
<dbReference type="GenomeRNAi" id="2214"/>
<dbReference type="Pharos" id="P08637">
    <property type="development level" value="Tclin"/>
</dbReference>
<dbReference type="PRO" id="PR:P08637"/>
<dbReference type="Proteomes" id="UP000005640">
    <property type="component" value="Chromosome 1"/>
</dbReference>
<dbReference type="RNAct" id="P08637">
    <property type="molecule type" value="protein"/>
</dbReference>
<dbReference type="Bgee" id="ENSG00000203747">
    <property type="expression patterns" value="Expressed in granulocyte and 98 other cell types or tissues"/>
</dbReference>
<dbReference type="ExpressionAtlas" id="P08637">
    <property type="expression patterns" value="baseline and differential"/>
</dbReference>
<dbReference type="GO" id="GO:0009897">
    <property type="term" value="C:external side of plasma membrane"/>
    <property type="evidence" value="ECO:0000314"/>
    <property type="project" value="UniProtKB"/>
</dbReference>
<dbReference type="GO" id="GO:0070062">
    <property type="term" value="C:extracellular exosome"/>
    <property type="evidence" value="ECO:0007005"/>
    <property type="project" value="UniProtKB"/>
</dbReference>
<dbReference type="GO" id="GO:0005615">
    <property type="term" value="C:extracellular space"/>
    <property type="evidence" value="ECO:0000314"/>
    <property type="project" value="UniProtKB"/>
</dbReference>
<dbReference type="GO" id="GO:0033001">
    <property type="term" value="C:Fc-gamma receptor III complex"/>
    <property type="evidence" value="ECO:0000314"/>
    <property type="project" value="UniProtKB"/>
</dbReference>
<dbReference type="GO" id="GO:0005886">
    <property type="term" value="C:plasma membrane"/>
    <property type="evidence" value="ECO:0000314"/>
    <property type="project" value="UniProtKB"/>
</dbReference>
<dbReference type="GO" id="GO:0019864">
    <property type="term" value="F:IgG binding"/>
    <property type="evidence" value="ECO:0007669"/>
    <property type="project" value="UniProtKB-KW"/>
</dbReference>
<dbReference type="GO" id="GO:0019770">
    <property type="term" value="F:IgG receptor activity"/>
    <property type="evidence" value="ECO:0000318"/>
    <property type="project" value="GO_Central"/>
</dbReference>
<dbReference type="GO" id="GO:0140375">
    <property type="term" value="F:immune receptor activity"/>
    <property type="evidence" value="ECO:0000314"/>
    <property type="project" value="UniProtKB"/>
</dbReference>
<dbReference type="GO" id="GO:0019772">
    <property type="term" value="F:low-affinity IgG receptor activity"/>
    <property type="evidence" value="ECO:0000314"/>
    <property type="project" value="UniProtKB"/>
</dbReference>
<dbReference type="GO" id="GO:0001788">
    <property type="term" value="P:antibody-dependent cellular cytotoxicity"/>
    <property type="evidence" value="ECO:0000314"/>
    <property type="project" value="UniProtKB"/>
</dbReference>
<dbReference type="GO" id="GO:0019722">
    <property type="term" value="P:calcium-mediated signaling"/>
    <property type="evidence" value="ECO:0000314"/>
    <property type="project" value="UniProtKB"/>
</dbReference>
<dbReference type="GO" id="GO:0007166">
    <property type="term" value="P:cell surface receptor signaling pathway"/>
    <property type="evidence" value="ECO:0000318"/>
    <property type="project" value="GO_Central"/>
</dbReference>
<dbReference type="GO" id="GO:0038094">
    <property type="term" value="P:Fc-gamma receptor signaling pathway"/>
    <property type="evidence" value="ECO:0000314"/>
    <property type="project" value="UniProtKB"/>
</dbReference>
<dbReference type="GO" id="GO:0006955">
    <property type="term" value="P:immune response"/>
    <property type="evidence" value="ECO:0000304"/>
    <property type="project" value="ProtInc"/>
</dbReference>
<dbReference type="GO" id="GO:0042116">
    <property type="term" value="P:macrophage activation"/>
    <property type="evidence" value="ECO:0000314"/>
    <property type="project" value="UniProtKB"/>
</dbReference>
<dbReference type="GO" id="GO:0030101">
    <property type="term" value="P:natural killer cell activation"/>
    <property type="evidence" value="ECO:0000314"/>
    <property type="project" value="UniProtKB"/>
</dbReference>
<dbReference type="GO" id="GO:0043320">
    <property type="term" value="P:natural killer cell degranulation"/>
    <property type="evidence" value="ECO:0000314"/>
    <property type="project" value="UniProtKB"/>
</dbReference>
<dbReference type="GO" id="GO:0042267">
    <property type="term" value="P:natural killer cell mediated cytotoxicity"/>
    <property type="evidence" value="ECO:0000314"/>
    <property type="project" value="UniProtKB"/>
</dbReference>
<dbReference type="GO" id="GO:0043491">
    <property type="term" value="P:phosphatidylinositol 3-kinase/protein kinase B signal transduction"/>
    <property type="evidence" value="ECO:0000314"/>
    <property type="project" value="UniProtKB"/>
</dbReference>
<dbReference type="GO" id="GO:0032819">
    <property type="term" value="P:positive regulation of natural killer cell proliferation"/>
    <property type="evidence" value="ECO:0000314"/>
    <property type="project" value="UniProtKB"/>
</dbReference>
<dbReference type="GO" id="GO:0032760">
    <property type="term" value="P:positive regulation of tumor necrosis factor production"/>
    <property type="evidence" value="ECO:0000314"/>
    <property type="project" value="UniProtKB"/>
</dbReference>
<dbReference type="CDD" id="cd05752">
    <property type="entry name" value="Ig1_FcgammaR_like"/>
    <property type="match status" value="1"/>
</dbReference>
<dbReference type="CDD" id="cd05753">
    <property type="entry name" value="Ig2_FcgammaR_like"/>
    <property type="match status" value="1"/>
</dbReference>
<dbReference type="FunFam" id="2.60.40.10:FF:000217">
    <property type="entry name" value="High affinity immunoglobulin gamma Fc receptor I"/>
    <property type="match status" value="1"/>
</dbReference>
<dbReference type="FunFam" id="2.60.40.10:FF:000356">
    <property type="entry name" value="Low affinity immunoglobulin gamma Fc region receptor III-A"/>
    <property type="match status" value="1"/>
</dbReference>
<dbReference type="Gene3D" id="2.60.40.10">
    <property type="entry name" value="Immunoglobulins"/>
    <property type="match status" value="2"/>
</dbReference>
<dbReference type="InterPro" id="IPR007110">
    <property type="entry name" value="Ig-like_dom"/>
</dbReference>
<dbReference type="InterPro" id="IPR036179">
    <property type="entry name" value="Ig-like_dom_sf"/>
</dbReference>
<dbReference type="InterPro" id="IPR013783">
    <property type="entry name" value="Ig-like_fold"/>
</dbReference>
<dbReference type="InterPro" id="IPR050488">
    <property type="entry name" value="Ig_Fc_receptor"/>
</dbReference>
<dbReference type="InterPro" id="IPR003599">
    <property type="entry name" value="Ig_sub"/>
</dbReference>
<dbReference type="PANTHER" id="PTHR11481">
    <property type="entry name" value="IMMUNOGLOBULIN FC RECEPTOR"/>
    <property type="match status" value="1"/>
</dbReference>
<dbReference type="PANTHER" id="PTHR11481:SF103">
    <property type="entry name" value="LOW AFFINITY IMMUNOGLOBULIN GAMMA FC REGION RECEPTOR III-A-RELATED"/>
    <property type="match status" value="1"/>
</dbReference>
<dbReference type="Pfam" id="PF13895">
    <property type="entry name" value="Ig_2"/>
    <property type="match status" value="2"/>
</dbReference>
<dbReference type="SMART" id="SM00409">
    <property type="entry name" value="IG"/>
    <property type="match status" value="2"/>
</dbReference>
<dbReference type="SUPFAM" id="SSF48726">
    <property type="entry name" value="Immunoglobulin"/>
    <property type="match status" value="2"/>
</dbReference>
<dbReference type="PROSITE" id="PS50835">
    <property type="entry name" value="IG_LIKE"/>
    <property type="match status" value="2"/>
</dbReference>